<organism>
    <name type="scientific">Buchnera aphidicola subsp. Acyrthosiphon pisum (strain APS)</name>
    <name type="common">Acyrthosiphon pisum symbiotic bacterium</name>
    <dbReference type="NCBI Taxonomy" id="107806"/>
    <lineage>
        <taxon>Bacteria</taxon>
        <taxon>Pseudomonadati</taxon>
        <taxon>Pseudomonadota</taxon>
        <taxon>Gammaproteobacteria</taxon>
        <taxon>Enterobacterales</taxon>
        <taxon>Erwiniaceae</taxon>
        <taxon>Buchnera</taxon>
    </lineage>
</organism>
<sequence>MIIPAFDLINGRTVRLYQGDYSNQKNYNVNLFNSLEVYKSKGIEIVHLVDLDGAKNSANRQIELFKKIVSHTTVPVQVGGGIRTTKDISTLLDLGVKRVVIGSSIVSNKKQVKQWLNFYGPDAIVLALDVHVDGSNKKEISIDGWQKKTNFILEEIIEYFLSSGLKHVLCTDISRDGTLLGPNFKLYKEICSNFKNINFQASGGVASLQDIIFLKKTGVKSIIIGRSLLEKKFTIEEAVKCWQRES</sequence>
<reference key="1">
    <citation type="journal article" date="2000" name="Nature">
        <title>Genome sequence of the endocellular bacterial symbiont of aphids Buchnera sp. APS.</title>
        <authorList>
            <person name="Shigenobu S."/>
            <person name="Watanabe H."/>
            <person name="Hattori M."/>
            <person name="Sakaki Y."/>
            <person name="Ishikawa H."/>
        </authorList>
    </citation>
    <scope>NUCLEOTIDE SEQUENCE [LARGE SCALE GENOMIC DNA]</scope>
    <source>
        <strain>APS</strain>
    </source>
</reference>
<proteinExistence type="inferred from homology"/>
<evidence type="ECO:0000250" key="1"/>
<evidence type="ECO:0000305" key="2"/>
<comment type="catalytic activity">
    <reaction>
        <text>1-(5-phospho-beta-D-ribosyl)-5-[(5-phospho-beta-D-ribosylamino)methylideneamino]imidazole-4-carboxamide = 5-[(5-phospho-1-deoxy-D-ribulos-1-ylimino)methylamino]-1-(5-phospho-beta-D-ribosyl)imidazole-4-carboxamide</text>
        <dbReference type="Rhea" id="RHEA:15469"/>
        <dbReference type="ChEBI" id="CHEBI:58435"/>
        <dbReference type="ChEBI" id="CHEBI:58525"/>
        <dbReference type="EC" id="5.3.1.16"/>
    </reaction>
</comment>
<comment type="pathway">
    <text>Amino-acid biosynthesis; L-histidine biosynthesis; L-histidine from 5-phospho-alpha-D-ribose 1-diphosphate: step 4/9.</text>
</comment>
<comment type="subcellular location">
    <subcellularLocation>
        <location evidence="1">Cytoplasm</location>
    </subcellularLocation>
</comment>
<comment type="similarity">
    <text evidence="2">Belongs to the HisA/HisF family.</text>
</comment>
<feature type="chain" id="PRO_0000141987" description="1-(5-phosphoribosyl)-5-[(5-phosphoribosylamino)methylideneamino] imidazole-4-carboxamide isomerase">
    <location>
        <begin position="1"/>
        <end position="246"/>
    </location>
</feature>
<feature type="active site" description="Proton acceptor" evidence="1">
    <location>
        <position position="7"/>
    </location>
</feature>
<feature type="active site" description="Proton donor" evidence="1">
    <location>
        <position position="129"/>
    </location>
</feature>
<gene>
    <name type="primary">hisA</name>
    <name type="ordered locus">BU104</name>
</gene>
<protein>
    <recommendedName>
        <fullName>1-(5-phosphoribosyl)-5-[(5-phosphoribosylamino)methylideneamino] imidazole-4-carboxamide isomerase</fullName>
        <ecNumber>5.3.1.16</ecNumber>
    </recommendedName>
    <alternativeName>
        <fullName>Phosphoribosylformimino-5-aminoimidazole carboxamide ribotide isomerase</fullName>
    </alternativeName>
</protein>
<dbReference type="EC" id="5.3.1.16"/>
<dbReference type="EMBL" id="BA000003">
    <property type="protein sequence ID" value="BAB12823.1"/>
    <property type="molecule type" value="Genomic_DNA"/>
</dbReference>
<dbReference type="RefSeq" id="NP_239937.1">
    <property type="nucleotide sequence ID" value="NC_002528.1"/>
</dbReference>
<dbReference type="RefSeq" id="WP_009874059.1">
    <property type="nucleotide sequence ID" value="NC_002528.1"/>
</dbReference>
<dbReference type="SMR" id="P57205"/>
<dbReference type="STRING" id="563178.BUAP5A_102"/>
<dbReference type="EnsemblBacteria" id="BAB12823">
    <property type="protein sequence ID" value="BAB12823"/>
    <property type="gene ID" value="BAB12823"/>
</dbReference>
<dbReference type="KEGG" id="buc:BU104"/>
<dbReference type="PATRIC" id="fig|107806.10.peg.112"/>
<dbReference type="eggNOG" id="COG0106">
    <property type="taxonomic scope" value="Bacteria"/>
</dbReference>
<dbReference type="HOGENOM" id="CLU_048577_1_2_6"/>
<dbReference type="UniPathway" id="UPA00031">
    <property type="reaction ID" value="UER00009"/>
</dbReference>
<dbReference type="Proteomes" id="UP000001806">
    <property type="component" value="Chromosome"/>
</dbReference>
<dbReference type="GO" id="GO:0005737">
    <property type="term" value="C:cytoplasm"/>
    <property type="evidence" value="ECO:0007669"/>
    <property type="project" value="UniProtKB-SubCell"/>
</dbReference>
<dbReference type="GO" id="GO:0003949">
    <property type="term" value="F:1-(5-phosphoribosyl)-5-[(5-phosphoribosylamino)methylideneamino]imidazole-4-carboxamide isomerase activity"/>
    <property type="evidence" value="ECO:0007669"/>
    <property type="project" value="UniProtKB-UniRule"/>
</dbReference>
<dbReference type="GO" id="GO:0000105">
    <property type="term" value="P:L-histidine biosynthetic process"/>
    <property type="evidence" value="ECO:0007669"/>
    <property type="project" value="UniProtKB-UniRule"/>
</dbReference>
<dbReference type="GO" id="GO:0000162">
    <property type="term" value="P:L-tryptophan biosynthetic process"/>
    <property type="evidence" value="ECO:0007669"/>
    <property type="project" value="TreeGrafter"/>
</dbReference>
<dbReference type="CDD" id="cd04732">
    <property type="entry name" value="HisA"/>
    <property type="match status" value="1"/>
</dbReference>
<dbReference type="FunFam" id="3.20.20.70:FF:000009">
    <property type="entry name" value="1-(5-phosphoribosyl)-5-[(5-phosphoribosylamino)methylideneamino] imidazole-4-carboxamide isomerase"/>
    <property type="match status" value="1"/>
</dbReference>
<dbReference type="Gene3D" id="3.20.20.70">
    <property type="entry name" value="Aldolase class I"/>
    <property type="match status" value="1"/>
</dbReference>
<dbReference type="HAMAP" id="MF_01014">
    <property type="entry name" value="HisA"/>
    <property type="match status" value="1"/>
</dbReference>
<dbReference type="InterPro" id="IPR013785">
    <property type="entry name" value="Aldolase_TIM"/>
</dbReference>
<dbReference type="InterPro" id="IPR006062">
    <property type="entry name" value="His_biosynth"/>
</dbReference>
<dbReference type="InterPro" id="IPR006063">
    <property type="entry name" value="HisA_bact_arch"/>
</dbReference>
<dbReference type="InterPro" id="IPR044524">
    <property type="entry name" value="Isoase_HisA-like"/>
</dbReference>
<dbReference type="InterPro" id="IPR023016">
    <property type="entry name" value="Isoase_HisA-like_bact"/>
</dbReference>
<dbReference type="InterPro" id="IPR011060">
    <property type="entry name" value="RibuloseP-bd_barrel"/>
</dbReference>
<dbReference type="NCBIfam" id="TIGR00007">
    <property type="entry name" value="1-(5-phosphoribosyl)-5-[(5-phosphoribosylamino)methylideneamino]imidazole-4-carboxamide isomerase"/>
    <property type="match status" value="1"/>
</dbReference>
<dbReference type="PANTHER" id="PTHR43090">
    <property type="entry name" value="1-(5-PHOSPHORIBOSYL)-5-[(5-PHOSPHORIBOSYLAMINO)METHYLIDENEAMINO] IMIDAZOLE-4-CARBOXAMIDE ISOMERASE"/>
    <property type="match status" value="1"/>
</dbReference>
<dbReference type="PANTHER" id="PTHR43090:SF2">
    <property type="entry name" value="1-(5-PHOSPHORIBOSYL)-5-[(5-PHOSPHORIBOSYLAMINO)METHYLIDENEAMINO] IMIDAZOLE-4-CARBOXAMIDE ISOMERASE"/>
    <property type="match status" value="1"/>
</dbReference>
<dbReference type="Pfam" id="PF00977">
    <property type="entry name" value="His_biosynth"/>
    <property type="match status" value="1"/>
</dbReference>
<dbReference type="SUPFAM" id="SSF51366">
    <property type="entry name" value="Ribulose-phoshate binding barrel"/>
    <property type="match status" value="1"/>
</dbReference>
<keyword id="KW-0028">Amino-acid biosynthesis</keyword>
<keyword id="KW-0963">Cytoplasm</keyword>
<keyword id="KW-0368">Histidine biosynthesis</keyword>
<keyword id="KW-0413">Isomerase</keyword>
<keyword id="KW-1185">Reference proteome</keyword>
<name>HIS4_BUCAI</name>
<accession>P57205</accession>